<keyword id="KW-0496">Mitochondrion</keyword>
<keyword id="KW-1185">Reference proteome</keyword>
<keyword id="KW-0687">Ribonucleoprotein</keyword>
<keyword id="KW-0689">Ribosomal protein</keyword>
<keyword id="KW-0809">Transit peptide</keyword>
<feature type="transit peptide" description="Mitochondrion" evidence="2">
    <location>
        <begin position="1"/>
        <end position="60"/>
    </location>
</feature>
<feature type="chain" id="PRO_0000261642" description="Large ribosomal subunit protein uL2m">
    <location>
        <begin position="61"/>
        <end position="304"/>
    </location>
</feature>
<evidence type="ECO:0000250" key="1">
    <source>
        <dbReference type="UniProtKB" id="Q5T653"/>
    </source>
</evidence>
<evidence type="ECO:0000255" key="2"/>
<evidence type="ECO:0000305" key="3"/>
<protein>
    <recommendedName>
        <fullName evidence="3">Large ribosomal subunit protein uL2m</fullName>
    </recommendedName>
    <alternativeName>
        <fullName>39S ribosomal protein L2, mitochondrial</fullName>
        <shortName>L2mt</shortName>
        <shortName>MRP-L2</shortName>
    </alternativeName>
</protein>
<reference key="1">
    <citation type="submission" date="2005-08" db="EMBL/GenBank/DDBJ databases">
        <authorList>
            <consortium name="NIH - Mammalian Gene Collection (MGC) project"/>
        </authorList>
    </citation>
    <scope>NUCLEOTIDE SEQUENCE [LARGE SCALE MRNA]</scope>
    <source>
        <tissue>Liver</tissue>
    </source>
</reference>
<dbReference type="EMBL" id="BC100081">
    <property type="protein sequence ID" value="AAI00082.1"/>
    <property type="molecule type" value="mRNA"/>
</dbReference>
<dbReference type="RefSeq" id="NP_001029308.1">
    <property type="nucleotide sequence ID" value="NM_001034136.1"/>
</dbReference>
<dbReference type="SMR" id="Q498T4"/>
<dbReference type="FunCoup" id="Q498T4">
    <property type="interactions" value="1347"/>
</dbReference>
<dbReference type="STRING" id="10116.ENSRNOP00000024380"/>
<dbReference type="PhosphoSitePlus" id="Q498T4"/>
<dbReference type="PaxDb" id="10116-ENSRNOP00000024380"/>
<dbReference type="Ensembl" id="ENSRNOT00000024380.8">
    <property type="protein sequence ID" value="ENSRNOP00000024380.5"/>
    <property type="gene ID" value="ENSRNOG00000018057.8"/>
</dbReference>
<dbReference type="GeneID" id="301240"/>
<dbReference type="KEGG" id="rno:301240"/>
<dbReference type="UCSC" id="RGD:1307147">
    <property type="organism name" value="rat"/>
</dbReference>
<dbReference type="AGR" id="RGD:1307147"/>
<dbReference type="CTD" id="51069"/>
<dbReference type="RGD" id="1307147">
    <property type="gene designation" value="Mrpl2"/>
</dbReference>
<dbReference type="eggNOG" id="KOG0438">
    <property type="taxonomic scope" value="Eukaryota"/>
</dbReference>
<dbReference type="GeneTree" id="ENSGT00940000153244"/>
<dbReference type="HOGENOM" id="CLU_036235_1_2_1"/>
<dbReference type="InParanoid" id="Q498T4"/>
<dbReference type="OMA" id="EHNKEHV"/>
<dbReference type="OrthoDB" id="268576at2759"/>
<dbReference type="PhylomeDB" id="Q498T4"/>
<dbReference type="Reactome" id="R-RNO-5389840">
    <property type="pathway name" value="Mitochondrial translation elongation"/>
</dbReference>
<dbReference type="Reactome" id="R-RNO-5419276">
    <property type="pathway name" value="Mitochondrial translation termination"/>
</dbReference>
<dbReference type="PRO" id="PR:Q498T4"/>
<dbReference type="Proteomes" id="UP000002494">
    <property type="component" value="Chromosome 9"/>
</dbReference>
<dbReference type="Bgee" id="ENSRNOG00000018057">
    <property type="expression patterns" value="Expressed in heart and 20 other cell types or tissues"/>
</dbReference>
<dbReference type="GO" id="GO:0005762">
    <property type="term" value="C:mitochondrial large ribosomal subunit"/>
    <property type="evidence" value="ECO:0000250"/>
    <property type="project" value="UniProtKB"/>
</dbReference>
<dbReference type="GO" id="GO:0005654">
    <property type="term" value="C:nucleoplasm"/>
    <property type="evidence" value="ECO:0007669"/>
    <property type="project" value="Ensembl"/>
</dbReference>
<dbReference type="GO" id="GO:0003723">
    <property type="term" value="F:RNA binding"/>
    <property type="evidence" value="ECO:0000318"/>
    <property type="project" value="GO_Central"/>
</dbReference>
<dbReference type="GO" id="GO:0003735">
    <property type="term" value="F:structural constituent of ribosome"/>
    <property type="evidence" value="ECO:0000318"/>
    <property type="project" value="GO_Central"/>
</dbReference>
<dbReference type="GO" id="GO:0032543">
    <property type="term" value="P:mitochondrial translation"/>
    <property type="evidence" value="ECO:0000318"/>
    <property type="project" value="GO_Central"/>
</dbReference>
<dbReference type="FunFam" id="2.30.30.30:FF:000025">
    <property type="entry name" value="39S ribosomal protein L2, mitochondrial"/>
    <property type="match status" value="1"/>
</dbReference>
<dbReference type="FunFam" id="2.40.50.140:FF:000157">
    <property type="entry name" value="39S ribosomal protein L2, mitochondrial"/>
    <property type="match status" value="1"/>
</dbReference>
<dbReference type="Gene3D" id="2.30.30.30">
    <property type="match status" value="1"/>
</dbReference>
<dbReference type="Gene3D" id="2.40.50.140">
    <property type="entry name" value="Nucleic acid-binding proteins"/>
    <property type="match status" value="1"/>
</dbReference>
<dbReference type="InterPro" id="IPR012340">
    <property type="entry name" value="NA-bd_OB-fold"/>
</dbReference>
<dbReference type="InterPro" id="IPR014722">
    <property type="entry name" value="Rib_uL2_dom2"/>
</dbReference>
<dbReference type="InterPro" id="IPR002171">
    <property type="entry name" value="Ribosomal_uL2"/>
</dbReference>
<dbReference type="InterPro" id="IPR022669">
    <property type="entry name" value="Ribosomal_uL2_C"/>
</dbReference>
<dbReference type="InterPro" id="IPR022666">
    <property type="entry name" value="Ribosomal_uL2_RNA-bd_dom"/>
</dbReference>
<dbReference type="InterPro" id="IPR008991">
    <property type="entry name" value="Translation_prot_SH3-like_sf"/>
</dbReference>
<dbReference type="PANTHER" id="PTHR13691:SF73">
    <property type="entry name" value="LARGE RIBOSOMAL SUBUNIT PROTEIN UL2M"/>
    <property type="match status" value="1"/>
</dbReference>
<dbReference type="PANTHER" id="PTHR13691">
    <property type="entry name" value="RIBOSOMAL PROTEIN L2"/>
    <property type="match status" value="1"/>
</dbReference>
<dbReference type="Pfam" id="PF00181">
    <property type="entry name" value="Ribosomal_L2"/>
    <property type="match status" value="1"/>
</dbReference>
<dbReference type="Pfam" id="PF03947">
    <property type="entry name" value="Ribosomal_L2_C"/>
    <property type="match status" value="1"/>
</dbReference>
<dbReference type="SMART" id="SM01383">
    <property type="entry name" value="Ribosomal_L2"/>
    <property type="match status" value="1"/>
</dbReference>
<dbReference type="SMART" id="SM01382">
    <property type="entry name" value="Ribosomal_L2_C"/>
    <property type="match status" value="1"/>
</dbReference>
<dbReference type="SUPFAM" id="SSF50249">
    <property type="entry name" value="Nucleic acid-binding proteins"/>
    <property type="match status" value="1"/>
</dbReference>
<dbReference type="SUPFAM" id="SSF50104">
    <property type="entry name" value="Translation proteins SH3-like domain"/>
    <property type="match status" value="1"/>
</dbReference>
<accession>Q498T4</accession>
<gene>
    <name type="primary">Mrpl2</name>
</gene>
<name>RM02_RAT</name>
<comment type="subunit">
    <text evidence="1">Component of the mitochondrial ribosome large subunit (39S) which comprises a 16S rRNA and about 50 distinct proteins.</text>
</comment>
<comment type="subcellular location">
    <subcellularLocation>
        <location evidence="1">Mitochondrion</location>
    </subcellularLocation>
</comment>
<comment type="similarity">
    <text evidence="3">Belongs to the universal ribosomal protein uL2 family.</text>
</comment>
<sequence length="304" mass="32999">MALCALASALRSLSLASPAITARVPTLLPVGQSNVLLQLPSALALPAHRPVHMSADRSAKFVSWKSRIKYTVKPVKMRKSGGRDHTGRIRVHGIGGGHKQNYRMIDFLRFRPEKGTEPEPFEEKVVVVRYDPCRSADIALVAGGSRKRWIIATENMKAGDTILNSNHIGRMAVAAQEGDAHPLGALPVGTLINNVESEPGRGAQYIRAAGTCGVLLRKVNGTAIIQLPSKRQMQVLESCTATVGRVSNVNHNQRVIGKAGRNRWLGKRPNSGLWQRKGGWAGRKIRPLPPMKSYVKLPSAAAQS</sequence>
<organism>
    <name type="scientific">Rattus norvegicus</name>
    <name type="common">Rat</name>
    <dbReference type="NCBI Taxonomy" id="10116"/>
    <lineage>
        <taxon>Eukaryota</taxon>
        <taxon>Metazoa</taxon>
        <taxon>Chordata</taxon>
        <taxon>Craniata</taxon>
        <taxon>Vertebrata</taxon>
        <taxon>Euteleostomi</taxon>
        <taxon>Mammalia</taxon>
        <taxon>Eutheria</taxon>
        <taxon>Euarchontoglires</taxon>
        <taxon>Glires</taxon>
        <taxon>Rodentia</taxon>
        <taxon>Myomorpha</taxon>
        <taxon>Muroidea</taxon>
        <taxon>Muridae</taxon>
        <taxon>Murinae</taxon>
        <taxon>Rattus</taxon>
    </lineage>
</organism>
<proteinExistence type="evidence at transcript level"/>